<reference key="1">
    <citation type="journal article" date="2003" name="Nat. Genet.">
        <title>Comparative analysis of the genome sequences of Bordetella pertussis, Bordetella parapertussis and Bordetella bronchiseptica.</title>
        <authorList>
            <person name="Parkhill J."/>
            <person name="Sebaihia M."/>
            <person name="Preston A."/>
            <person name="Murphy L.D."/>
            <person name="Thomson N.R."/>
            <person name="Harris D.E."/>
            <person name="Holden M.T.G."/>
            <person name="Churcher C.M."/>
            <person name="Bentley S.D."/>
            <person name="Mungall K.L."/>
            <person name="Cerdeno-Tarraga A.-M."/>
            <person name="Temple L."/>
            <person name="James K.D."/>
            <person name="Harris B."/>
            <person name="Quail M.A."/>
            <person name="Achtman M."/>
            <person name="Atkin R."/>
            <person name="Baker S."/>
            <person name="Basham D."/>
            <person name="Bason N."/>
            <person name="Cherevach I."/>
            <person name="Chillingworth T."/>
            <person name="Collins M."/>
            <person name="Cronin A."/>
            <person name="Davis P."/>
            <person name="Doggett J."/>
            <person name="Feltwell T."/>
            <person name="Goble A."/>
            <person name="Hamlin N."/>
            <person name="Hauser H."/>
            <person name="Holroyd S."/>
            <person name="Jagels K."/>
            <person name="Leather S."/>
            <person name="Moule S."/>
            <person name="Norberczak H."/>
            <person name="O'Neil S."/>
            <person name="Ormond D."/>
            <person name="Price C."/>
            <person name="Rabbinowitsch E."/>
            <person name="Rutter S."/>
            <person name="Sanders M."/>
            <person name="Saunders D."/>
            <person name="Seeger K."/>
            <person name="Sharp S."/>
            <person name="Simmonds M."/>
            <person name="Skelton J."/>
            <person name="Squares R."/>
            <person name="Squares S."/>
            <person name="Stevens K."/>
            <person name="Unwin L."/>
            <person name="Whitehead S."/>
            <person name="Barrell B.G."/>
            <person name="Maskell D.J."/>
        </authorList>
    </citation>
    <scope>NUCLEOTIDE SEQUENCE [LARGE SCALE GENOMIC DNA]</scope>
    <source>
        <strain>Tohama I / ATCC BAA-589 / NCTC 13251</strain>
    </source>
</reference>
<feature type="chain" id="PRO_0000112728" description="Acetylornithine aminotransferase 2">
    <location>
        <begin position="1"/>
        <end position="396"/>
    </location>
</feature>
<feature type="binding site" evidence="1">
    <location>
        <begin position="102"/>
        <end position="103"/>
    </location>
    <ligand>
        <name>pyridoxal 5'-phosphate</name>
        <dbReference type="ChEBI" id="CHEBI:597326"/>
    </ligand>
</feature>
<feature type="binding site" evidence="1">
    <location>
        <position position="134"/>
    </location>
    <ligand>
        <name>pyridoxal 5'-phosphate</name>
        <dbReference type="ChEBI" id="CHEBI:597326"/>
    </ligand>
</feature>
<feature type="binding site" evidence="1">
    <location>
        <position position="137"/>
    </location>
    <ligand>
        <name>N(2)-acetyl-L-ornithine</name>
        <dbReference type="ChEBI" id="CHEBI:57805"/>
    </ligand>
</feature>
<feature type="binding site" evidence="1">
    <location>
        <begin position="219"/>
        <end position="222"/>
    </location>
    <ligand>
        <name>pyridoxal 5'-phosphate</name>
        <dbReference type="ChEBI" id="CHEBI:597326"/>
    </ligand>
</feature>
<feature type="binding site" evidence="1">
    <location>
        <position position="276"/>
    </location>
    <ligand>
        <name>pyridoxal 5'-phosphate</name>
        <dbReference type="ChEBI" id="CHEBI:597326"/>
    </ligand>
</feature>
<feature type="modified residue" description="N6-(pyridoxal phosphate)lysine" evidence="1">
    <location>
        <position position="248"/>
    </location>
</feature>
<dbReference type="EC" id="2.6.1.11" evidence="1"/>
<dbReference type="EMBL" id="BX640412">
    <property type="protein sequence ID" value="CAE44781.1"/>
    <property type="molecule type" value="Genomic_DNA"/>
</dbReference>
<dbReference type="RefSeq" id="NP_879309.1">
    <property type="nucleotide sequence ID" value="NC_002929.2"/>
</dbReference>
<dbReference type="RefSeq" id="WP_004565905.1">
    <property type="nucleotide sequence ID" value="NZ_CP039022.1"/>
</dbReference>
<dbReference type="SMR" id="Q7VSH3"/>
<dbReference type="STRING" id="257313.BP0451"/>
<dbReference type="PaxDb" id="257313-BP0451"/>
<dbReference type="KEGG" id="bpe:BP0451"/>
<dbReference type="PATRIC" id="fig|257313.5.peg.489"/>
<dbReference type="eggNOG" id="COG4992">
    <property type="taxonomic scope" value="Bacteria"/>
</dbReference>
<dbReference type="HOGENOM" id="CLU_016922_10_1_4"/>
<dbReference type="UniPathway" id="UPA00068">
    <property type="reaction ID" value="UER00109"/>
</dbReference>
<dbReference type="Proteomes" id="UP000002676">
    <property type="component" value="Chromosome"/>
</dbReference>
<dbReference type="GO" id="GO:0005737">
    <property type="term" value="C:cytoplasm"/>
    <property type="evidence" value="ECO:0007669"/>
    <property type="project" value="UniProtKB-SubCell"/>
</dbReference>
<dbReference type="GO" id="GO:0042802">
    <property type="term" value="F:identical protein binding"/>
    <property type="evidence" value="ECO:0007669"/>
    <property type="project" value="TreeGrafter"/>
</dbReference>
<dbReference type="GO" id="GO:0003992">
    <property type="term" value="F:N2-acetyl-L-ornithine:2-oxoglutarate 5-aminotransferase activity"/>
    <property type="evidence" value="ECO:0007669"/>
    <property type="project" value="UniProtKB-UniRule"/>
</dbReference>
<dbReference type="GO" id="GO:0030170">
    <property type="term" value="F:pyridoxal phosphate binding"/>
    <property type="evidence" value="ECO:0007669"/>
    <property type="project" value="InterPro"/>
</dbReference>
<dbReference type="GO" id="GO:0006526">
    <property type="term" value="P:L-arginine biosynthetic process"/>
    <property type="evidence" value="ECO:0007669"/>
    <property type="project" value="UniProtKB-UniRule"/>
</dbReference>
<dbReference type="CDD" id="cd00610">
    <property type="entry name" value="OAT_like"/>
    <property type="match status" value="1"/>
</dbReference>
<dbReference type="FunFam" id="3.40.640.10:FF:000004">
    <property type="entry name" value="Acetylornithine aminotransferase"/>
    <property type="match status" value="1"/>
</dbReference>
<dbReference type="Gene3D" id="3.90.1150.10">
    <property type="entry name" value="Aspartate Aminotransferase, domain 1"/>
    <property type="match status" value="1"/>
</dbReference>
<dbReference type="Gene3D" id="3.40.640.10">
    <property type="entry name" value="Type I PLP-dependent aspartate aminotransferase-like (Major domain)"/>
    <property type="match status" value="1"/>
</dbReference>
<dbReference type="HAMAP" id="MF_01107">
    <property type="entry name" value="ArgD_aminotrans_3"/>
    <property type="match status" value="1"/>
</dbReference>
<dbReference type="InterPro" id="IPR004636">
    <property type="entry name" value="AcOrn/SuccOrn_fam"/>
</dbReference>
<dbReference type="InterPro" id="IPR005814">
    <property type="entry name" value="Aminotrans_3"/>
</dbReference>
<dbReference type="InterPro" id="IPR049704">
    <property type="entry name" value="Aminotrans_3_PPA_site"/>
</dbReference>
<dbReference type="InterPro" id="IPR050103">
    <property type="entry name" value="Class-III_PLP-dep_AT"/>
</dbReference>
<dbReference type="InterPro" id="IPR015424">
    <property type="entry name" value="PyrdxlP-dep_Trfase"/>
</dbReference>
<dbReference type="InterPro" id="IPR015421">
    <property type="entry name" value="PyrdxlP-dep_Trfase_major"/>
</dbReference>
<dbReference type="InterPro" id="IPR015422">
    <property type="entry name" value="PyrdxlP-dep_Trfase_small"/>
</dbReference>
<dbReference type="NCBIfam" id="NF002325">
    <property type="entry name" value="PRK01278.1"/>
    <property type="match status" value="1"/>
</dbReference>
<dbReference type="NCBIfam" id="NF002985">
    <property type="entry name" value="PRK03715.1"/>
    <property type="match status" value="1"/>
</dbReference>
<dbReference type="PANTHER" id="PTHR11986:SF79">
    <property type="entry name" value="ACETYLORNITHINE AMINOTRANSFERASE, MITOCHONDRIAL"/>
    <property type="match status" value="1"/>
</dbReference>
<dbReference type="PANTHER" id="PTHR11986">
    <property type="entry name" value="AMINOTRANSFERASE CLASS III"/>
    <property type="match status" value="1"/>
</dbReference>
<dbReference type="Pfam" id="PF00202">
    <property type="entry name" value="Aminotran_3"/>
    <property type="match status" value="1"/>
</dbReference>
<dbReference type="PIRSF" id="PIRSF000521">
    <property type="entry name" value="Transaminase_4ab_Lys_Orn"/>
    <property type="match status" value="1"/>
</dbReference>
<dbReference type="SUPFAM" id="SSF53383">
    <property type="entry name" value="PLP-dependent transferases"/>
    <property type="match status" value="1"/>
</dbReference>
<dbReference type="PROSITE" id="PS00600">
    <property type="entry name" value="AA_TRANSFER_CLASS_3"/>
    <property type="match status" value="1"/>
</dbReference>
<protein>
    <recommendedName>
        <fullName evidence="1">Acetylornithine aminotransferase 2</fullName>
        <shortName evidence="1">ACOAT 2</shortName>
        <ecNumber evidence="1">2.6.1.11</ecNumber>
    </recommendedName>
</protein>
<organism>
    <name type="scientific">Bordetella pertussis (strain Tohama I / ATCC BAA-589 / NCTC 13251)</name>
    <dbReference type="NCBI Taxonomy" id="257313"/>
    <lineage>
        <taxon>Bacteria</taxon>
        <taxon>Pseudomonadati</taxon>
        <taxon>Pseudomonadota</taxon>
        <taxon>Betaproteobacteria</taxon>
        <taxon>Burkholderiales</taxon>
        <taxon>Alcaligenaceae</taxon>
        <taxon>Bordetella</taxon>
    </lineage>
</organism>
<keyword id="KW-0028">Amino-acid biosynthesis</keyword>
<keyword id="KW-0032">Aminotransferase</keyword>
<keyword id="KW-0055">Arginine biosynthesis</keyword>
<keyword id="KW-0963">Cytoplasm</keyword>
<keyword id="KW-0663">Pyridoxal phosphate</keyword>
<keyword id="KW-1185">Reference proteome</keyword>
<keyword id="KW-0808">Transferase</keyword>
<comment type="catalytic activity">
    <reaction evidence="1">
        <text>N(2)-acetyl-L-ornithine + 2-oxoglutarate = N-acetyl-L-glutamate 5-semialdehyde + L-glutamate</text>
        <dbReference type="Rhea" id="RHEA:18049"/>
        <dbReference type="ChEBI" id="CHEBI:16810"/>
        <dbReference type="ChEBI" id="CHEBI:29123"/>
        <dbReference type="ChEBI" id="CHEBI:29985"/>
        <dbReference type="ChEBI" id="CHEBI:57805"/>
        <dbReference type="EC" id="2.6.1.11"/>
    </reaction>
</comment>
<comment type="cofactor">
    <cofactor evidence="1">
        <name>pyridoxal 5'-phosphate</name>
        <dbReference type="ChEBI" id="CHEBI:597326"/>
    </cofactor>
    <text evidence="1">Binds 1 pyridoxal phosphate per subunit.</text>
</comment>
<comment type="pathway">
    <text evidence="1">Amino-acid biosynthesis; L-arginine biosynthesis; N(2)-acetyl-L-ornithine from L-glutamate: step 4/4.</text>
</comment>
<comment type="subunit">
    <text evidence="1">Homodimer.</text>
</comment>
<comment type="subcellular location">
    <subcellularLocation>
        <location evidence="1">Cytoplasm</location>
    </subcellularLocation>
</comment>
<comment type="miscellaneous">
    <text evidence="1">May also have succinyldiaminopimelate aminotransferase activity, thus carrying out the corresponding step in lysine biosynthesis.</text>
</comment>
<comment type="similarity">
    <text evidence="1">Belongs to the class-III pyridoxal-phosphate-dependent aminotransferase family. ArgD subfamily.</text>
</comment>
<gene>
    <name evidence="1" type="primary">argD2</name>
    <name type="ordered locus">BP0451</name>
</gene>
<evidence type="ECO:0000255" key="1">
    <source>
        <dbReference type="HAMAP-Rule" id="MF_01107"/>
    </source>
</evidence>
<sequence length="396" mass="42880">MEFSQFKVNALMEITARPDLVFVRGQGSWLEDHAGKRYLDFVQGWAVNTLGHCAPEMKRAMAEQADKLMNPSPAFYNLPSIELAQRLTSASCFDRVFFANSGAEANEGAIKLARKWGRVNRNGAYKIITMNHGFHGRTLATMSASGKPGWDTMFAPQVEGFPKAEINDLDSVRALIDAQTVAVMLEPVQGEAGVIPATREFMQGLRKLADEHGILFIVDEVQTGMGRTGSLFAYQQFDVIPDIMTLAKGIGGGIPLAALLAREEVCVFAHGDQGGTYNGNPLCAAVGVAVFDTITAPGFMEAAQARTRQLSEGLLALSAKWSLRGERGMGLLRALVLDRDDAPAIVEAARMLAPEGLLLNAPRGNLLRFMPALNVTEADMARMLEQLDGVIAAVRK</sequence>
<proteinExistence type="inferred from homology"/>
<name>ARGD2_BORPE</name>
<accession>Q7VSH3</accession>